<protein>
    <recommendedName>
        <fullName>Bradykinin-potentiating peptide 14a</fullName>
        <shortName>BPP-14a</shortName>
    </recommendedName>
    <component>
        <recommendedName>
            <fullName>Bradykinin-potentiating peptide 11a</fullName>
            <shortName>BPP-11a</shortName>
        </recommendedName>
        <alternativeName>
            <fullName>Bradykinin-potentiating peptide V-2</fullName>
            <shortName>BPPV-2</shortName>
        </alternativeName>
    </component>
    <component>
        <recommendedName>
            <fullName>Bradykinin-potentiating peptide 11a-F</fullName>
            <shortName>BPP-11a-F</shortName>
        </recommendedName>
    </component>
    <component>
        <recommendedName>
            <fullName>Bradykinin-potentiating peptide 5b</fullName>
            <shortName>BPP-5b</shortName>
        </recommendedName>
    </component>
</protein>
<accession>P85163</accession>
<accession>P85164</accession>
<name>BPPEA_BOTJA</name>
<organism>
    <name type="scientific">Bothrops jararaca</name>
    <name type="common">Jararaca</name>
    <name type="synonym">Bothrops jajaraca</name>
    <dbReference type="NCBI Taxonomy" id="8724"/>
    <lineage>
        <taxon>Eukaryota</taxon>
        <taxon>Metazoa</taxon>
        <taxon>Chordata</taxon>
        <taxon>Craniata</taxon>
        <taxon>Vertebrata</taxon>
        <taxon>Euteleostomi</taxon>
        <taxon>Lepidosauria</taxon>
        <taxon>Squamata</taxon>
        <taxon>Bifurcata</taxon>
        <taxon>Unidentata</taxon>
        <taxon>Episquamata</taxon>
        <taxon>Toxicofera</taxon>
        <taxon>Serpentes</taxon>
        <taxon>Colubroidea</taxon>
        <taxon>Viperidae</taxon>
        <taxon>Crotalinae</taxon>
        <taxon>Bothrops</taxon>
    </lineage>
</organism>
<dbReference type="GO" id="GO:0005576">
    <property type="term" value="C:extracellular region"/>
    <property type="evidence" value="ECO:0007669"/>
    <property type="project" value="UniProtKB-SubCell"/>
</dbReference>
<dbReference type="GO" id="GO:0030414">
    <property type="term" value="F:peptidase inhibitor activity"/>
    <property type="evidence" value="ECO:0007669"/>
    <property type="project" value="UniProtKB-KW"/>
</dbReference>
<dbReference type="GO" id="GO:0090729">
    <property type="term" value="F:toxin activity"/>
    <property type="evidence" value="ECO:0007669"/>
    <property type="project" value="UniProtKB-KW"/>
</dbReference>
<dbReference type="GO" id="GO:0008217">
    <property type="term" value="P:regulation of blood pressure"/>
    <property type="evidence" value="ECO:0007669"/>
    <property type="project" value="UniProtKB-KW"/>
</dbReference>
<reference evidence="7" key="1">
    <citation type="journal article" date="2004" name="Peptides">
        <title>Identification of five new bradykinin potentiating peptides (BPPs) from Bothrops jararaca crude venom by using electrospray ionization tandem mass spectrometry after a two-step liquid chromatography.</title>
        <authorList>
            <person name="Ianzer D."/>
            <person name="Konno K."/>
            <person name="Marques-Porto R."/>
            <person name="Portaro F.C.V."/>
            <person name="Stoecklin R."/>
            <person name="de Camargo A.C.M."/>
            <person name="Pimenta D.C."/>
        </authorList>
    </citation>
    <scope>PROTEIN SEQUENCE (BPP-11A AND BPP-14A)</scope>
    <scope>FUNCTION</scope>
    <scope>SUBCELLULAR LOCATION</scope>
    <scope>TISSUE SPECIFICITY</scope>
    <scope>MASS SPECTROMETRY</scope>
    <scope>PYROGLUTAMATE FORMATION AT GLN-1</scope>
    <source>
        <tissue evidence="1">Venom</tissue>
    </source>
</reference>
<reference key="2">
    <citation type="journal article" date="2012" name="Mol. Cell. Proteomics">
        <title>Peptidomics of three Bothrops snake venoms: insights into the molecular diversification of proteomes and peptidomes.</title>
        <authorList>
            <person name="Tashima A.K."/>
            <person name="Zelanis A."/>
            <person name="Kitano E.S."/>
            <person name="Ianzer D."/>
            <person name="Melo R.L."/>
            <person name="Rioli V."/>
            <person name="Sant'anna S.S."/>
            <person name="Schenberg A.C."/>
            <person name="Camargo A.C."/>
            <person name="Serrano S.M.T."/>
        </authorList>
    </citation>
    <scope>PROTEIN SEQUENCE (BPP-11A AND BPP-14A)</scope>
    <scope>PYROGLUTAMATE FORMATION AT GLN-1 AND GLN-4</scope>
    <scope>IDENTIFICATION BY MASS SPECTROMETRY</scope>
    <source>
        <tissue>Venom</tissue>
    </source>
</reference>
<reference key="3">
    <citation type="journal article" date="2010" name="J. Proteome Res.">
        <title>Analysis of the ontogenetic variation in the venom proteome/peptidome of Bothrops jararaca reveals different strategies to deal with prey.</title>
        <authorList>
            <person name="Zelanis A."/>
            <person name="Tashima A.K."/>
            <person name="Rocha M.M."/>
            <person name="Furtado M.F."/>
            <person name="Camargo A.C."/>
            <person name="Ho P.L."/>
            <person name="Serrano S.M."/>
        </authorList>
    </citation>
    <scope>PROTEIN SEQUENCE</scope>
    <scope>PYROGLUTAMATE FORMATION AT GLN-1</scope>
    <scope>DEVELOPMENTAL STAGE (BPP-14A)</scope>
    <scope>IDENTIFICATION BY MASS SPECTROMETRY</scope>
    <source>
        <tissue>Venom</tissue>
    </source>
</reference>
<reference key="4">
    <citation type="journal article" date="1971" name="Biochemistry">
        <title>Angiotensin-converting enzyme inhibitors from the venom of Bothrops jararaca. Isolation, elucidation of structure, and synthesis.</title>
        <authorList>
            <person name="Ondetti M.A."/>
            <person name="Williams N.J."/>
            <person name="Sabo E.F."/>
            <person name="Pluscec J."/>
            <person name="Weaver E.R."/>
            <person name="Kocy O."/>
        </authorList>
    </citation>
    <scope>PROTEIN SEQUENCE OF 4-14 (BPP-11A)</scope>
    <scope>FUNCTION</scope>
    <source>
        <tissue>Venom</tissue>
    </source>
</reference>
<reference key="5">
    <citation type="journal article" date="2005" name="Rapid Commun. Mass Spectrom.">
        <title>Fast analysis of low molecular mass compounds present in snake venom: identification of ten new pyroglutamate-containing peptides.</title>
        <authorList>
            <person name="Wermelinger L.S."/>
            <person name="Dutra D.L."/>
            <person name="Oliveira-Carvalho A.L."/>
            <person name="Soares M.R."/>
            <person name="Bloch C. Jr."/>
            <person name="Zingali R.B."/>
        </authorList>
    </citation>
    <scope>PROTEIN SEQUENCE OF 4-14 (BPP-11A)</scope>
    <scope>SUBCELLULAR LOCATION</scope>
    <scope>TISSUE SPECIFICITY</scope>
    <scope>MASS SPECTROMETRY</scope>
    <scope>PYROGLUTAMATE FORMATION AT GLN-4</scope>
    <source>
        <tissue>Venom</tissue>
    </source>
</reference>
<reference key="6">
    <citation type="journal article" date="2007" name="Rapid Commun. Mass Spectrom.">
        <title>Mass spectrometric analysis of the individual variability of Bothrops jararaca venom peptide fraction. Evidence for sex-based variation among the bradykinin-potentiating peptides.</title>
        <authorList>
            <person name="Pimenta D.C."/>
            <person name="Prezoto B.C."/>
            <person name="Konno K."/>
            <person name="de Melo R.L."/>
            <person name="Furtado M.F."/>
            <person name="de Camargo A.C.M."/>
            <person name="Serrano S.M.T."/>
        </authorList>
    </citation>
    <scope>PROTEIN SEQUENCE OF 4-10 (BPP-11A-F)</scope>
    <scope>FUNCTION</scope>
    <scope>SUBCELLULAR LOCATION</scope>
    <scope>TISSUE SPECIFICITY</scope>
    <scope>MASS SPECTROMETRY</scope>
    <scope>PYROGLUTAMATE FORMATION AT GLN-4</scope>
    <source>
        <tissue>Venom</tissue>
    </source>
</reference>
<proteinExistence type="evidence at protein level"/>
<keyword id="KW-0903">Direct protein sequencing</keyword>
<keyword id="KW-0382">Hypotensive agent</keyword>
<keyword id="KW-0481">Metalloenzyme inhibitor</keyword>
<keyword id="KW-0483">Metalloprotease inhibitor</keyword>
<keyword id="KW-0646">Protease inhibitor</keyword>
<keyword id="KW-0873">Pyrrolidone carboxylic acid</keyword>
<keyword id="KW-0964">Secreted</keyword>
<keyword id="KW-0800">Toxin</keyword>
<sequence>QWAQWPRPTPQIPP</sequence>
<evidence type="ECO:0000269" key="1">
    <source>
    </source>
</evidence>
<evidence type="ECO:0000269" key="2">
    <source>
    </source>
</evidence>
<evidence type="ECO:0000269" key="3">
    <source>
    </source>
</evidence>
<evidence type="ECO:0000269" key="4">
    <source>
    </source>
</evidence>
<evidence type="ECO:0000269" key="5">
    <source>
    </source>
</evidence>
<evidence type="ECO:0000269" key="6">
    <source>
    </source>
</evidence>
<evidence type="ECO:0000305" key="7"/>
<evidence type="ECO:0000305" key="8">
    <source>
    </source>
</evidence>
<comment type="function">
    <text evidence="1 3 6">This peptide both inhibits the activity of the angiotensin-converting enzyme (ACE) and enhances the action of bradykinin by inhibiting the peptidases that inactivate it. It acts as an indirect hypotensive agent. Bradykinin-potentiating peptide 11a-F has much lower activity than BPP-11a.</text>
</comment>
<comment type="subcellular location">
    <subcellularLocation>
        <location evidence="1 2 3">Secreted</location>
    </subcellularLocation>
</comment>
<comment type="tissue specificity">
    <text evidence="1 2 3">Expressed by the venom gland.</text>
</comment>
<comment type="developmental stage">
    <text evidence="4">This protein seems to be found in both adult and newborn B.jararaca venoms.</text>
</comment>
<comment type="mass spectrometry">
    <molecule>Bradykinin-potentiating peptide 5b</molecule>
    <text>BPP-5b.</text>
</comment>
<comment type="mass spectrometry">
    <molecule>Bradykinin-potentiating peptide 11a</molecule>
    <text>BPP-11a.</text>
</comment>
<comment type="mass spectrometry">
    <molecule>Bradykinin-potentiating peptide 11a</molecule>
    <text>BPP-11a.</text>
</comment>
<comment type="mass spectrometry">
    <molecule>Bradykinin-potentiating peptide 11a-F</molecule>
    <text>BPP-11a-F.</text>
</comment>
<comment type="mass spectrometry">
    <molecule>Bradykinin-potentiating peptide 14a</molecule>
    <text>BPP-14a.</text>
</comment>
<comment type="miscellaneous">
    <text evidence="8">Bradykinin-potentiating peptide 11a-F is present only in female snakes.</text>
</comment>
<comment type="similarity">
    <text evidence="7">Belongs to the bradykinin-potentiating peptide family.</text>
</comment>
<feature type="peptide" id="PRO_0000292925" description="Bradykinin-potentiating peptide 14a" evidence="1">
    <location>
        <begin position="1"/>
        <end position="14"/>
    </location>
</feature>
<feature type="peptide" id="PRO_0000292917" description="Bradykinin-potentiating peptide 11a">
    <location>
        <begin position="4"/>
        <end position="14"/>
    </location>
</feature>
<feature type="peptide" id="PRO_0000292918" description="Bradykinin-potentiating peptide 11a-F">
    <location>
        <begin position="4"/>
        <end position="10"/>
    </location>
</feature>
<feature type="peptide" id="PRO_0000292919" description="Bradykinin-potentiating peptide 5b">
    <location>
        <begin position="4"/>
        <end position="8"/>
    </location>
</feature>
<feature type="modified residue" description="Pyrrolidone carboxylic acid" evidence="1 4 5">
    <location>
        <position position="1"/>
    </location>
</feature>
<feature type="modified residue" description="Pyrrolidone carboxylic acid" evidence="2 3 5">
    <location>
        <position position="4"/>
    </location>
</feature>